<evidence type="ECO:0000255" key="1">
    <source>
        <dbReference type="HAMAP-Rule" id="MF_00087"/>
    </source>
</evidence>
<sequence length="448" mass="50060">MHFIAISINHRTADVALREQVAFRDDALRIAHEDLYETKSILENVILSTCNRTEVYAVVDQIHTGCYYIQRFLARAFGFEVDDIKAMSEVKVGDEAVEHLLRVTSGLDSIVLGETQILGQIRDAFFLAQSTGTTGTIFNHLFKQAITFAKRAHNETDIADNAVSVSYAAVELAKKVFGKLKSKQAIIIGAGEMSELSLLNLLGSGITDITVVNRTIENAMKLAAKHQVKYDELSSLPNLLESADIVISSTSAQTYIITNEMIERIAENRKQDSLVLIDIAVPRDIEPGISAITNIFNYDVDDLKGLVDANLRERQLAAATISEQIPAEIHAHNEWISMLGVVPVIRALREKAMAIQAETMDSIDRKLPGLSERERKIISKHTKSIINQMLKDPIKQAKELSSDKKSNEKLELFQNIFDIEAECPHEQAKQQKESKVKEISARRIFSFE</sequence>
<dbReference type="EC" id="1.2.1.70" evidence="1"/>
<dbReference type="EMBL" id="AJ938182">
    <property type="protein sequence ID" value="CAI81221.1"/>
    <property type="molecule type" value="Genomic_DNA"/>
</dbReference>
<dbReference type="RefSeq" id="WP_000545448.1">
    <property type="nucleotide sequence ID" value="NC_007622.1"/>
</dbReference>
<dbReference type="SMR" id="Q2YTB7"/>
<dbReference type="KEGG" id="sab:SAB1532c"/>
<dbReference type="HOGENOM" id="CLU_035113_2_2_9"/>
<dbReference type="UniPathway" id="UPA00251">
    <property type="reaction ID" value="UER00316"/>
</dbReference>
<dbReference type="GO" id="GO:0008883">
    <property type="term" value="F:glutamyl-tRNA reductase activity"/>
    <property type="evidence" value="ECO:0007669"/>
    <property type="project" value="UniProtKB-UniRule"/>
</dbReference>
<dbReference type="GO" id="GO:0050661">
    <property type="term" value="F:NADP binding"/>
    <property type="evidence" value="ECO:0007669"/>
    <property type="project" value="InterPro"/>
</dbReference>
<dbReference type="GO" id="GO:0006782">
    <property type="term" value="P:protoporphyrinogen IX biosynthetic process"/>
    <property type="evidence" value="ECO:0007669"/>
    <property type="project" value="UniProtKB-UniRule"/>
</dbReference>
<dbReference type="CDD" id="cd05213">
    <property type="entry name" value="NAD_bind_Glutamyl_tRNA_reduct"/>
    <property type="match status" value="1"/>
</dbReference>
<dbReference type="FunFam" id="3.30.460.30:FF:000001">
    <property type="entry name" value="Glutamyl-tRNA reductase"/>
    <property type="match status" value="1"/>
</dbReference>
<dbReference type="FunFam" id="3.40.50.720:FF:000031">
    <property type="entry name" value="Glutamyl-tRNA reductase"/>
    <property type="match status" value="1"/>
</dbReference>
<dbReference type="Gene3D" id="3.30.460.30">
    <property type="entry name" value="Glutamyl-tRNA reductase, N-terminal domain"/>
    <property type="match status" value="1"/>
</dbReference>
<dbReference type="Gene3D" id="3.40.50.720">
    <property type="entry name" value="NAD(P)-binding Rossmann-like Domain"/>
    <property type="match status" value="1"/>
</dbReference>
<dbReference type="HAMAP" id="MF_00087">
    <property type="entry name" value="Glu_tRNA_reductase"/>
    <property type="match status" value="1"/>
</dbReference>
<dbReference type="InterPro" id="IPR000343">
    <property type="entry name" value="4pyrrol_synth_GluRdtase"/>
</dbReference>
<dbReference type="InterPro" id="IPR015896">
    <property type="entry name" value="4pyrrol_synth_GluRdtase_dimer"/>
</dbReference>
<dbReference type="InterPro" id="IPR015895">
    <property type="entry name" value="4pyrrol_synth_GluRdtase_N"/>
</dbReference>
<dbReference type="InterPro" id="IPR018214">
    <property type="entry name" value="GluRdtase_CS"/>
</dbReference>
<dbReference type="InterPro" id="IPR036453">
    <property type="entry name" value="GluRdtase_dimer_dom_sf"/>
</dbReference>
<dbReference type="InterPro" id="IPR036343">
    <property type="entry name" value="GluRdtase_N_sf"/>
</dbReference>
<dbReference type="InterPro" id="IPR036291">
    <property type="entry name" value="NAD(P)-bd_dom_sf"/>
</dbReference>
<dbReference type="InterPro" id="IPR006151">
    <property type="entry name" value="Shikm_DH/Glu-tRNA_Rdtase"/>
</dbReference>
<dbReference type="NCBIfam" id="TIGR01035">
    <property type="entry name" value="hemA"/>
    <property type="match status" value="1"/>
</dbReference>
<dbReference type="PANTHER" id="PTHR43120">
    <property type="entry name" value="GLUTAMYL-TRNA REDUCTASE 1, CHLOROPLASTIC"/>
    <property type="match status" value="1"/>
</dbReference>
<dbReference type="PANTHER" id="PTHR43120:SF1">
    <property type="entry name" value="GLUTAMYL-TRNA REDUCTASE 1, CHLOROPLASTIC"/>
    <property type="match status" value="1"/>
</dbReference>
<dbReference type="Pfam" id="PF00745">
    <property type="entry name" value="GlutR_dimer"/>
    <property type="match status" value="1"/>
</dbReference>
<dbReference type="Pfam" id="PF05201">
    <property type="entry name" value="GlutR_N"/>
    <property type="match status" value="1"/>
</dbReference>
<dbReference type="Pfam" id="PF01488">
    <property type="entry name" value="Shikimate_DH"/>
    <property type="match status" value="1"/>
</dbReference>
<dbReference type="PIRSF" id="PIRSF000445">
    <property type="entry name" value="4pyrrol_synth_GluRdtase"/>
    <property type="match status" value="1"/>
</dbReference>
<dbReference type="SUPFAM" id="SSF69742">
    <property type="entry name" value="Glutamyl tRNA-reductase catalytic, N-terminal domain"/>
    <property type="match status" value="1"/>
</dbReference>
<dbReference type="SUPFAM" id="SSF69075">
    <property type="entry name" value="Glutamyl tRNA-reductase dimerization domain"/>
    <property type="match status" value="1"/>
</dbReference>
<dbReference type="SUPFAM" id="SSF51735">
    <property type="entry name" value="NAD(P)-binding Rossmann-fold domains"/>
    <property type="match status" value="1"/>
</dbReference>
<dbReference type="PROSITE" id="PS00747">
    <property type="entry name" value="GLUTR"/>
    <property type="match status" value="1"/>
</dbReference>
<proteinExistence type="inferred from homology"/>
<accession>Q2YTB7</accession>
<gene>
    <name evidence="1" type="primary">hemA</name>
    <name type="ordered locus">SAB1532c</name>
</gene>
<feature type="chain" id="PRO_1000004703" description="Glutamyl-tRNA reductase">
    <location>
        <begin position="1"/>
        <end position="448"/>
    </location>
</feature>
<feature type="active site" description="Nucleophile" evidence="1">
    <location>
        <position position="50"/>
    </location>
</feature>
<feature type="binding site" evidence="1">
    <location>
        <begin position="49"/>
        <end position="52"/>
    </location>
    <ligand>
        <name>substrate</name>
    </ligand>
</feature>
<feature type="binding site" evidence="1">
    <location>
        <position position="109"/>
    </location>
    <ligand>
        <name>substrate</name>
    </ligand>
</feature>
<feature type="binding site" evidence="1">
    <location>
        <begin position="114"/>
        <end position="116"/>
    </location>
    <ligand>
        <name>substrate</name>
    </ligand>
</feature>
<feature type="binding site" evidence="1">
    <location>
        <position position="120"/>
    </location>
    <ligand>
        <name>substrate</name>
    </ligand>
</feature>
<feature type="binding site" evidence="1">
    <location>
        <begin position="189"/>
        <end position="194"/>
    </location>
    <ligand>
        <name>NADP(+)</name>
        <dbReference type="ChEBI" id="CHEBI:58349"/>
    </ligand>
</feature>
<feature type="site" description="Important for activity" evidence="1">
    <location>
        <position position="99"/>
    </location>
</feature>
<organism>
    <name type="scientific">Staphylococcus aureus (strain bovine RF122 / ET3-1)</name>
    <dbReference type="NCBI Taxonomy" id="273036"/>
    <lineage>
        <taxon>Bacteria</taxon>
        <taxon>Bacillati</taxon>
        <taxon>Bacillota</taxon>
        <taxon>Bacilli</taxon>
        <taxon>Bacillales</taxon>
        <taxon>Staphylococcaceae</taxon>
        <taxon>Staphylococcus</taxon>
    </lineage>
</organism>
<comment type="function">
    <text evidence="1">Catalyzes the NADPH-dependent reduction of glutamyl-tRNA(Glu) to glutamate 1-semialdehyde (GSA).</text>
</comment>
<comment type="catalytic activity">
    <reaction evidence="1">
        <text>(S)-4-amino-5-oxopentanoate + tRNA(Glu) + NADP(+) = L-glutamyl-tRNA(Glu) + NADPH + H(+)</text>
        <dbReference type="Rhea" id="RHEA:12344"/>
        <dbReference type="Rhea" id="RHEA-COMP:9663"/>
        <dbReference type="Rhea" id="RHEA-COMP:9680"/>
        <dbReference type="ChEBI" id="CHEBI:15378"/>
        <dbReference type="ChEBI" id="CHEBI:57501"/>
        <dbReference type="ChEBI" id="CHEBI:57783"/>
        <dbReference type="ChEBI" id="CHEBI:58349"/>
        <dbReference type="ChEBI" id="CHEBI:78442"/>
        <dbReference type="ChEBI" id="CHEBI:78520"/>
        <dbReference type="EC" id="1.2.1.70"/>
    </reaction>
</comment>
<comment type="pathway">
    <text evidence="1">Porphyrin-containing compound metabolism; protoporphyrin-IX biosynthesis; 5-aminolevulinate from L-glutamyl-tRNA(Glu): step 1/2.</text>
</comment>
<comment type="subunit">
    <text evidence="1">Homodimer.</text>
</comment>
<comment type="domain">
    <text evidence="1">Possesses an unusual extended V-shaped dimeric structure with each monomer consisting of three distinct domains arranged along a curved 'spinal' alpha-helix. The N-terminal catalytic domain specifically recognizes the glutamate moiety of the substrate. The second domain is the NADPH-binding domain, and the third C-terminal domain is responsible for dimerization.</text>
</comment>
<comment type="miscellaneous">
    <text evidence="1">During catalysis, the active site Cys acts as a nucleophile attacking the alpha-carbonyl group of tRNA-bound glutamate with the formation of a thioester intermediate between enzyme and glutamate, and the concomitant release of tRNA(Glu). The thioester intermediate is finally reduced by direct hydride transfer from NADPH, to form the product GSA.</text>
</comment>
<comment type="similarity">
    <text evidence="1">Belongs to the glutamyl-tRNA reductase family.</text>
</comment>
<name>HEM1_STAAB</name>
<keyword id="KW-0521">NADP</keyword>
<keyword id="KW-0560">Oxidoreductase</keyword>
<keyword id="KW-0627">Porphyrin biosynthesis</keyword>
<reference key="1">
    <citation type="journal article" date="2007" name="PLoS ONE">
        <title>Molecular correlates of host specialization in Staphylococcus aureus.</title>
        <authorList>
            <person name="Herron-Olson L."/>
            <person name="Fitzgerald J.R."/>
            <person name="Musser J.M."/>
            <person name="Kapur V."/>
        </authorList>
    </citation>
    <scope>NUCLEOTIDE SEQUENCE [LARGE SCALE GENOMIC DNA]</scope>
    <source>
        <strain>bovine RF122 / ET3-1</strain>
    </source>
</reference>
<protein>
    <recommendedName>
        <fullName evidence="1">Glutamyl-tRNA reductase</fullName>
        <shortName evidence="1">GluTR</shortName>
        <ecNumber evidence="1">1.2.1.70</ecNumber>
    </recommendedName>
</protein>